<protein>
    <recommendedName>
        <fullName>p-hydroxybenzoic acid--AMP ligase FadD22</fullName>
        <shortName>p-HB--AMP ligase FadD22</shortName>
        <ecNumber evidence="1">6.2.1.50</ecNumber>
    </recommendedName>
    <alternativeName>
        <fullName>p-hydroxybenzoic acid-AMP synthetase</fullName>
        <shortName>p-HB-AMP synthetase</shortName>
    </alternativeName>
</protein>
<keyword id="KW-0276">Fatty acid metabolism</keyword>
<keyword id="KW-0436">Ligase</keyword>
<keyword id="KW-0443">Lipid metabolism</keyword>
<keyword id="KW-0596">Phosphopantetheine</keyword>
<keyword id="KW-0597">Phosphoprotein</keyword>
<keyword id="KW-1185">Reference proteome</keyword>
<reference key="1">
    <citation type="journal article" date="1998" name="Nature">
        <title>Deciphering the biology of Mycobacterium tuberculosis from the complete genome sequence.</title>
        <authorList>
            <person name="Cole S.T."/>
            <person name="Brosch R."/>
            <person name="Parkhill J."/>
            <person name="Garnier T."/>
            <person name="Churcher C.M."/>
            <person name="Harris D.E."/>
            <person name="Gordon S.V."/>
            <person name="Eiglmeier K."/>
            <person name="Gas S."/>
            <person name="Barry C.E. III"/>
            <person name="Tekaia F."/>
            <person name="Badcock K."/>
            <person name="Basham D."/>
            <person name="Brown D."/>
            <person name="Chillingworth T."/>
            <person name="Connor R."/>
            <person name="Davies R.M."/>
            <person name="Devlin K."/>
            <person name="Feltwell T."/>
            <person name="Gentles S."/>
            <person name="Hamlin N."/>
            <person name="Holroyd S."/>
            <person name="Hornsby T."/>
            <person name="Jagels K."/>
            <person name="Krogh A."/>
            <person name="McLean J."/>
            <person name="Moule S."/>
            <person name="Murphy L.D."/>
            <person name="Oliver S."/>
            <person name="Osborne J."/>
            <person name="Quail M.A."/>
            <person name="Rajandream M.A."/>
            <person name="Rogers J."/>
            <person name="Rutter S."/>
            <person name="Seeger K."/>
            <person name="Skelton S."/>
            <person name="Squares S."/>
            <person name="Squares R."/>
            <person name="Sulston J.E."/>
            <person name="Taylor K."/>
            <person name="Whitehead S."/>
            <person name="Barrell B.G."/>
        </authorList>
    </citation>
    <scope>NUCLEOTIDE SEQUENCE [LARGE SCALE GENOMIC DNA]</scope>
    <source>
        <strain>ATCC 25618 / H37Rv</strain>
    </source>
</reference>
<reference key="2">
    <citation type="journal article" date="2010" name="FEBS J.">
        <title>Delineation of the roles of FadD22, FadD26 and FadD29 in the biosynthesis of phthiocerol dimycocerosates and related compounds in Mycobacterium tuberculosis.</title>
        <authorList>
            <person name="Simeone R."/>
            <person name="Leger M."/>
            <person name="Constant P."/>
            <person name="Malaga W."/>
            <person name="Marrakchi H."/>
            <person name="Daffe M."/>
            <person name="Guilhot C."/>
            <person name="Chalut C."/>
        </authorList>
    </citation>
    <scope>FUNCTION IN THE BIOSYNTHESIS OF P-HYDROXYBENZOIC ACID-AMP</scope>
    <scope>CATALYTIC ACTIVITY</scope>
    <scope>DISRUPTION PHENOTYPE</scope>
    <source>
        <strain>ATCC 25618 / H37Rv</strain>
    </source>
</reference>
<reference key="3">
    <citation type="journal article" date="2011" name="Mol. Cell. Proteomics">
        <title>Proteogenomic analysis of Mycobacterium tuberculosis by high resolution mass spectrometry.</title>
        <authorList>
            <person name="Kelkar D.S."/>
            <person name="Kumar D."/>
            <person name="Kumar P."/>
            <person name="Balakrishnan L."/>
            <person name="Muthusamy B."/>
            <person name="Yadav A.K."/>
            <person name="Shrivastava P."/>
            <person name="Marimuthu A."/>
            <person name="Anand S."/>
            <person name="Sundaram H."/>
            <person name="Kingsbury R."/>
            <person name="Harsha H.C."/>
            <person name="Nair B."/>
            <person name="Prasad T.S."/>
            <person name="Chauhan D.S."/>
            <person name="Katoch K."/>
            <person name="Katoch V.M."/>
            <person name="Kumar P."/>
            <person name="Chaerkady R."/>
            <person name="Ramachandran S."/>
            <person name="Dash D."/>
            <person name="Pandey A."/>
        </authorList>
    </citation>
    <scope>IDENTIFICATION BY MASS SPECTROMETRY [LARGE SCALE ANALYSIS]</scope>
    <source>
        <strain>ATCC 25618 / H37Rv</strain>
    </source>
</reference>
<proteinExistence type="evidence at protein level"/>
<evidence type="ECO:0000250" key="1">
    <source>
        <dbReference type="UniProtKB" id="Q7TXK7"/>
    </source>
</evidence>
<evidence type="ECO:0000255" key="2">
    <source>
        <dbReference type="PROSITE-ProRule" id="PRU00258"/>
    </source>
</evidence>
<evidence type="ECO:0000269" key="3">
    <source>
    </source>
</evidence>
<evidence type="ECO:0000305" key="4"/>
<sequence length="705" mass="75198">MRNGNLAGLLAEQASEAGWYDRPAFYAADVVTHGQIHDGAARLGEVLRNRGLSSGDRVLLCLPDSPDLVQLLLACLARGVMAFLANPELHRDDHALAARNTEPALVVTSDALRDRFQPSRVAEAAELMSEAARVAPGGYEPMGGDALAYATYTSGTTGPPKAAIHRHADPLTFVDAMCRKALRLTPEDTGLCSARMYFAYGLGNSVWFPLATGGSAVINSAPVTPEAAAILSARFGPSVLYGVPNFFARVIDSCSPDSFRSLRCVVSAGEALELGLAERLMEFFGGIPILDGIGSTEVGQTFVSNRVDEWRLGTLGRVLPPYEIRVVAPDGTTAGPGVEGDLWVRGPAIAKGYWNRPDSPVANEGWLDTRDRVCIDSDGWVTYRCRADDTEVIGGVNVDPREVERLIIEDEAVAEAAVVAVRESTGASTLQAFLVATSGATIDGSVMRDLHRGLLNRLSAFKVPHRFAVVDRLPRTPNGKLVRGALRKQSPTKPIWELSLTEPGSGVRAQRDDLSASNMTIAGGNDGGATLRERLVALRQERQRLVVDAVCAEAAKMLGEPDPWSVDQDLAFSELGFDSQMTVTLCKRLAAVTGLRLPETVGWDYGSISGLAQYLEAELAGGHGRLKSAGPVNSGATGLWAIEEQLNKVEELVAVIADGEKQRVADRLRALLGTIAGSEAGLGKLIQAASTPDEIFQLIDSELGK</sequence>
<gene>
    <name type="primary">fadD22</name>
    <name type="ordered locus">Rv2948c</name>
</gene>
<name>FAA22_MYCTU</name>
<feature type="chain" id="PRO_0000406350" description="p-hydroxybenzoic acid--AMP ligase FadD22">
    <location>
        <begin position="1"/>
        <end position="705"/>
    </location>
</feature>
<feature type="domain" description="Carrier" evidence="2">
    <location>
        <begin position="541"/>
        <end position="619"/>
    </location>
</feature>
<feature type="modified residue" description="O-(pantetheine 4'-phosphoryl)serine" evidence="2">
    <location>
        <position position="579"/>
    </location>
</feature>
<comment type="function">
    <text evidence="3">Catalyzes the adenylation of p-hydroxybenzoic acid (pHBA) to form p-hydroxybenzoic acid-AMP (pHBA-AMP), which is converted directly to p-hydroxybenzoyl-S-FadD22 (pHBA-S-FAdD22) thioester intermediate in a CoA-independent manner by attack of the phosphopantetheine thiol of FadD22. Usually, this intermediate primes the biosynthesis of the phenolphthiocerol (PPOL) by presenting the pHBA starter unit for elongation by Pks15/1, but M.tuberculosis lacks Pks15/1 due to a natural frameshift and thus is unable to produce PPOL.</text>
</comment>
<comment type="catalytic activity">
    <reaction evidence="1">
        <text>holo-[4-hydroxyphenylalkanoate synthase] + 4-hydroxybenzoate + ATP = 4-hydroxyphenyl-[4-hydroxyphenylalkanoate synthase] + AMP + diphosphate</text>
        <dbReference type="Rhea" id="RHEA:54696"/>
        <dbReference type="Rhea" id="RHEA-COMP:12684"/>
        <dbReference type="Rhea" id="RHEA-COMP:13969"/>
        <dbReference type="ChEBI" id="CHEBI:17879"/>
        <dbReference type="ChEBI" id="CHEBI:30616"/>
        <dbReference type="ChEBI" id="CHEBI:33019"/>
        <dbReference type="ChEBI" id="CHEBI:64479"/>
        <dbReference type="ChEBI" id="CHEBI:138321"/>
        <dbReference type="ChEBI" id="CHEBI:456215"/>
        <dbReference type="EC" id="6.2.1.50"/>
    </reaction>
</comment>
<comment type="catalytic activity">
    <reaction evidence="3">
        <text>4-hydroxybenzoate + ATP + H(+) = 4-hydroxybenzoyl-5'-AMP + diphosphate</text>
        <dbReference type="Rhea" id="RHEA:46692"/>
        <dbReference type="ChEBI" id="CHEBI:15378"/>
        <dbReference type="ChEBI" id="CHEBI:17879"/>
        <dbReference type="ChEBI" id="CHEBI:30616"/>
        <dbReference type="ChEBI" id="CHEBI:33019"/>
        <dbReference type="ChEBI" id="CHEBI:86435"/>
    </reaction>
    <physiologicalReaction direction="left-to-right" evidence="3">
        <dbReference type="Rhea" id="RHEA:46693"/>
    </physiologicalReaction>
</comment>
<comment type="pathway">
    <text>Lipid metabolism; fatty acid biosynthesis.</text>
</comment>
<comment type="disruption phenotype">
    <text evidence="3">Disruption of fadD22 abolishes the production of PPOL.</text>
</comment>
<comment type="similarity">
    <text evidence="4">Belongs to the ATP-dependent AMP-binding enzyme family.</text>
</comment>
<dbReference type="EC" id="6.2.1.50" evidence="1"/>
<dbReference type="EMBL" id="AL123456">
    <property type="protein sequence ID" value="CCP45752.1"/>
    <property type="molecule type" value="Genomic_DNA"/>
</dbReference>
<dbReference type="PIR" id="A70669">
    <property type="entry name" value="A70669"/>
</dbReference>
<dbReference type="RefSeq" id="NP_217464.1">
    <property type="nucleotide sequence ID" value="NC_000962.3"/>
</dbReference>
<dbReference type="RefSeq" id="WP_003414884.1">
    <property type="nucleotide sequence ID" value="NZ_NVQJ01000015.1"/>
</dbReference>
<dbReference type="SMR" id="P9WQ61"/>
<dbReference type="STRING" id="83332.Rv2948c"/>
<dbReference type="SwissLipids" id="SLP:000001280"/>
<dbReference type="PaxDb" id="83332-Rv2948c"/>
<dbReference type="DNASU" id="887295"/>
<dbReference type="GeneID" id="887295"/>
<dbReference type="KEGG" id="mtu:Rv2948c"/>
<dbReference type="KEGG" id="mtv:RVBD_2948c"/>
<dbReference type="TubercuList" id="Rv2948c"/>
<dbReference type="eggNOG" id="COG0236">
    <property type="taxonomic scope" value="Bacteria"/>
</dbReference>
<dbReference type="eggNOG" id="COG0318">
    <property type="taxonomic scope" value="Bacteria"/>
</dbReference>
<dbReference type="InParanoid" id="P9WQ61"/>
<dbReference type="OrthoDB" id="9803968at2"/>
<dbReference type="PhylomeDB" id="P9WQ61"/>
<dbReference type="BRENDA" id="6.2.1.50">
    <property type="organism ID" value="3445"/>
</dbReference>
<dbReference type="UniPathway" id="UPA00094"/>
<dbReference type="Proteomes" id="UP000001584">
    <property type="component" value="Chromosome"/>
</dbReference>
<dbReference type="GO" id="GO:0016020">
    <property type="term" value="C:membrane"/>
    <property type="evidence" value="ECO:0007669"/>
    <property type="project" value="GOC"/>
</dbReference>
<dbReference type="GO" id="GO:0016878">
    <property type="term" value="F:acid-thiol ligase activity"/>
    <property type="evidence" value="ECO:0000314"/>
    <property type="project" value="MTBBASE"/>
</dbReference>
<dbReference type="GO" id="GO:0016874">
    <property type="term" value="F:ligase activity"/>
    <property type="evidence" value="ECO:0000314"/>
    <property type="project" value="MTBBASE"/>
</dbReference>
<dbReference type="GO" id="GO:0031177">
    <property type="term" value="F:phosphopantetheine binding"/>
    <property type="evidence" value="ECO:0007669"/>
    <property type="project" value="InterPro"/>
</dbReference>
<dbReference type="GO" id="GO:0071766">
    <property type="term" value="P:Actinobacterium-type cell wall biogenesis"/>
    <property type="evidence" value="ECO:0000314"/>
    <property type="project" value="MTBBASE"/>
</dbReference>
<dbReference type="GO" id="GO:0006633">
    <property type="term" value="P:fatty acid biosynthetic process"/>
    <property type="evidence" value="ECO:0007669"/>
    <property type="project" value="UniProtKB-UniPathway"/>
</dbReference>
<dbReference type="GO" id="GO:0009247">
    <property type="term" value="P:glycolipid biosynthetic process"/>
    <property type="evidence" value="ECO:0000315"/>
    <property type="project" value="MTBBASE"/>
</dbReference>
<dbReference type="GO" id="GO:0008610">
    <property type="term" value="P:lipid biosynthetic process"/>
    <property type="evidence" value="ECO:0000315"/>
    <property type="project" value="UniProtKB"/>
</dbReference>
<dbReference type="GO" id="GO:0097041">
    <property type="term" value="P:phenolic phthiocerol biosynthetic process"/>
    <property type="evidence" value="ECO:0000314"/>
    <property type="project" value="MTBBASE"/>
</dbReference>
<dbReference type="GO" id="GO:0044550">
    <property type="term" value="P:secondary metabolite biosynthetic process"/>
    <property type="evidence" value="ECO:0000318"/>
    <property type="project" value="GO_Central"/>
</dbReference>
<dbReference type="CDD" id="cd05919">
    <property type="entry name" value="BCL_like"/>
    <property type="match status" value="1"/>
</dbReference>
<dbReference type="FunFam" id="3.30.300.30:FF:000042">
    <property type="entry name" value="Fatty-acid-CoA ligase FadD22"/>
    <property type="match status" value="1"/>
</dbReference>
<dbReference type="FunFam" id="3.40.50.12780:FF:000055">
    <property type="entry name" value="Fatty-acid-CoA ligase FadD22"/>
    <property type="match status" value="1"/>
</dbReference>
<dbReference type="FunFam" id="1.10.1200.10:FF:000007">
    <property type="entry name" value="Probable polyketide synthase pks17"/>
    <property type="match status" value="1"/>
</dbReference>
<dbReference type="Gene3D" id="3.30.300.30">
    <property type="match status" value="1"/>
</dbReference>
<dbReference type="Gene3D" id="1.10.1200.10">
    <property type="entry name" value="ACP-like"/>
    <property type="match status" value="1"/>
</dbReference>
<dbReference type="Gene3D" id="3.40.50.12780">
    <property type="entry name" value="N-terminal domain of ligase-like"/>
    <property type="match status" value="1"/>
</dbReference>
<dbReference type="InterPro" id="IPR036736">
    <property type="entry name" value="ACP-like_sf"/>
</dbReference>
<dbReference type="InterPro" id="IPR025110">
    <property type="entry name" value="AMP-bd_C"/>
</dbReference>
<dbReference type="InterPro" id="IPR045851">
    <property type="entry name" value="AMP-bd_C_sf"/>
</dbReference>
<dbReference type="InterPro" id="IPR000873">
    <property type="entry name" value="AMP-dep_synth/lig_dom"/>
</dbReference>
<dbReference type="InterPro" id="IPR042099">
    <property type="entry name" value="ANL_N_sf"/>
</dbReference>
<dbReference type="InterPro" id="IPR020806">
    <property type="entry name" value="PKS_PP-bd"/>
</dbReference>
<dbReference type="InterPro" id="IPR009081">
    <property type="entry name" value="PP-bd_ACP"/>
</dbReference>
<dbReference type="NCBIfam" id="NF004716">
    <property type="entry name" value="PRK06060.1"/>
    <property type="match status" value="1"/>
</dbReference>
<dbReference type="PANTHER" id="PTHR43352">
    <property type="entry name" value="ACETYL-COA SYNTHETASE"/>
    <property type="match status" value="1"/>
</dbReference>
<dbReference type="PANTHER" id="PTHR43352:SF1">
    <property type="entry name" value="ANTHRANILATE--COA LIGASE"/>
    <property type="match status" value="1"/>
</dbReference>
<dbReference type="Pfam" id="PF00501">
    <property type="entry name" value="AMP-binding"/>
    <property type="match status" value="1"/>
</dbReference>
<dbReference type="Pfam" id="PF13193">
    <property type="entry name" value="AMP-binding_C"/>
    <property type="match status" value="1"/>
</dbReference>
<dbReference type="Pfam" id="PF00550">
    <property type="entry name" value="PP-binding"/>
    <property type="match status" value="1"/>
</dbReference>
<dbReference type="SMART" id="SM00823">
    <property type="entry name" value="PKS_PP"/>
    <property type="match status" value="1"/>
</dbReference>
<dbReference type="SUPFAM" id="SSF56801">
    <property type="entry name" value="Acetyl-CoA synthetase-like"/>
    <property type="match status" value="1"/>
</dbReference>
<dbReference type="SUPFAM" id="SSF47336">
    <property type="entry name" value="ACP-like"/>
    <property type="match status" value="1"/>
</dbReference>
<dbReference type="PROSITE" id="PS50075">
    <property type="entry name" value="CARRIER"/>
    <property type="match status" value="1"/>
</dbReference>
<organism>
    <name type="scientific">Mycobacterium tuberculosis (strain ATCC 25618 / H37Rv)</name>
    <dbReference type="NCBI Taxonomy" id="83332"/>
    <lineage>
        <taxon>Bacteria</taxon>
        <taxon>Bacillati</taxon>
        <taxon>Actinomycetota</taxon>
        <taxon>Actinomycetes</taxon>
        <taxon>Mycobacteriales</taxon>
        <taxon>Mycobacteriaceae</taxon>
        <taxon>Mycobacterium</taxon>
        <taxon>Mycobacterium tuberculosis complex</taxon>
    </lineage>
</organism>
<accession>P9WQ61</accession>
<accession>L0TE13</accession>
<accession>P96283</accession>
<accession>Q7D6D9</accession>